<evidence type="ECO:0000269" key="1">
    <source>
    </source>
</evidence>
<evidence type="ECO:0000269" key="2">
    <source>
    </source>
</evidence>
<evidence type="ECO:0000305" key="3"/>
<accession>Q89642</accession>
<dbReference type="EMBL" id="U02468">
    <property type="protein sequence ID" value="AAA17786.1"/>
    <property type="molecule type" value="Genomic_DNA"/>
</dbReference>
<dbReference type="EMBL" id="U18466">
    <property type="protein sequence ID" value="AAA65257.1"/>
    <property type="molecule type" value="Genomic_DNA"/>
</dbReference>
<dbReference type="RefSeq" id="NP_042721.1">
    <property type="nucleotide sequence ID" value="NC_001659.2"/>
</dbReference>
<dbReference type="SMR" id="Q89642"/>
<dbReference type="GeneID" id="22220409"/>
<dbReference type="KEGG" id="vg:22220409"/>
<dbReference type="Proteomes" id="UP000000624">
    <property type="component" value="Segment"/>
</dbReference>
<dbReference type="InterPro" id="IPR004858">
    <property type="entry name" value="MGF_505"/>
</dbReference>
<dbReference type="Pfam" id="PF03158">
    <property type="entry name" value="DUF249"/>
    <property type="match status" value="1"/>
</dbReference>
<comment type="function">
    <text evidence="1">Plays a role in virus cell tropism, and may be required for efficient virus replication in macrophages.</text>
</comment>
<comment type="induction">
    <text evidence="2">Expressed in the early phase of the viral replicative cycle.</text>
</comment>
<comment type="similarity">
    <text evidence="3">Belongs to the asfivirus MGF 505 family.</text>
</comment>
<sequence length="280" mass="32509">MSSSLQELCRKKLPDCILPEFFDDYVLQLLGLHWQDHGSLQRIEKNQILVQQEPIHINEALKVAASEGNYEIVELLLSWEADPRYAVVGALESKYYDLVYKYYDLVKDCHDILPLIQNPETFEKCHELNNPCSLKCLFKHAVIHDMLPILQKYTYFLDGWEYCNQMLFELACSKKKYEMVVWIEGVLGIGKVTSLFTIAISNRDLHLYSLGHLIILERMQSCGQDPTFLLNHFLRDVSIKGLLPFVLKTIEYGGSKEIAITLAKKYQHKHILKYFETGKC</sequence>
<organism>
    <name type="scientific">African swine fever virus (strain Badajoz 1971 Vero-adapted)</name>
    <name type="common">Ba71V</name>
    <name type="synonym">ASFV</name>
    <dbReference type="NCBI Taxonomy" id="10498"/>
    <lineage>
        <taxon>Viruses</taxon>
        <taxon>Varidnaviria</taxon>
        <taxon>Bamfordvirae</taxon>
        <taxon>Nucleocytoviricota</taxon>
        <taxon>Pokkesviricetes</taxon>
        <taxon>Asfuvirales</taxon>
        <taxon>Asfarviridae</taxon>
        <taxon>Asfivirus</taxon>
        <taxon>African swine fever virus</taxon>
    </lineage>
</organism>
<keyword id="KW-0244">Early protein</keyword>
<keyword id="KW-1185">Reference proteome</keyword>
<gene>
    <name type="ordered locus">BA71R-026</name>
    <name type="ORF">A280R</name>
</gene>
<proteinExistence type="evidence at transcript level"/>
<protein>
    <recommendedName>
        <fullName>Protein MGF 505-3R</fullName>
    </recommendedName>
</protein>
<feature type="chain" id="PRO_0000373322" description="Protein MGF 505-3R">
    <location>
        <begin position="1"/>
        <end position="280"/>
    </location>
</feature>
<reference key="1">
    <citation type="journal article" date="1990" name="J. Virol.">
        <title>Multigene families in African swine fever virus: family 110.</title>
        <authorList>
            <person name="Almendral J.M."/>
            <person name="Almazan F."/>
            <person name="Blasco R."/>
            <person name="Vinuela E."/>
        </authorList>
    </citation>
    <scope>NUCLEOTIDE SEQUENCE [GENOMIC DNA]</scope>
</reference>
<reference key="2">
    <citation type="journal article" date="1995" name="Virology">
        <title>Analysis of the complete nucleotide sequence of African swine fever virus.</title>
        <authorList>
            <person name="Yanez R.J."/>
            <person name="Rodriguez J.M."/>
            <person name="Nogal M.L."/>
            <person name="Yuste L."/>
            <person name="Enriquez C."/>
            <person name="Rodriguez J.F."/>
            <person name="Vinuela E."/>
        </authorList>
    </citation>
    <scope>NUCLEOTIDE SEQUENCE [LARGE SCALE GENOMIC DNA]</scope>
</reference>
<reference key="3">
    <citation type="journal article" date="2001" name="J. Virol.">
        <title>African swine fever virus multigene family 360 and 530 genes are novel macrophage host range determinants.</title>
        <authorList>
            <person name="Zsak L."/>
            <person name="Lu Z."/>
            <person name="Burrage T.G."/>
            <person name="Neilan J.G."/>
            <person name="Kutish G.F."/>
            <person name="Moore D.M."/>
            <person name="Rock D.L."/>
        </authorList>
    </citation>
    <scope>FUNCTION</scope>
</reference>
<reference key="4">
    <citation type="journal article" date="2020" name="J. Virol.">
        <title>The African Swine Fever Virus Transcriptome.</title>
        <authorList>
            <person name="Cackett G."/>
            <person name="Matelska D."/>
            <person name="Sykora M."/>
            <person name="Portugal R."/>
            <person name="Malecki M."/>
            <person name="Baehler J."/>
            <person name="Dixon L."/>
            <person name="Werner F."/>
        </authorList>
    </citation>
    <scope>INDUCTION</scope>
</reference>
<name>5053R_ASFB7</name>
<organismHost>
    <name type="scientific">Ornithodoros</name>
    <name type="common">relapsing fever ticks</name>
    <dbReference type="NCBI Taxonomy" id="6937"/>
</organismHost>
<organismHost>
    <name type="scientific">Sus scrofa</name>
    <name type="common">Pig</name>
    <dbReference type="NCBI Taxonomy" id="9823"/>
</organismHost>